<name>CYB6_SYNSC</name>
<reference key="1">
    <citation type="submission" date="2005-07" db="EMBL/GenBank/DDBJ databases">
        <title>Complete sequence of Synechococcus sp. CC9605.</title>
        <authorList>
            <consortium name="US DOE Joint Genome Institute"/>
            <person name="Copeland A."/>
            <person name="Lucas S."/>
            <person name="Lapidus A."/>
            <person name="Barry K."/>
            <person name="Detter J.C."/>
            <person name="Glavina T."/>
            <person name="Hammon N."/>
            <person name="Israni S."/>
            <person name="Pitluck S."/>
            <person name="Schmutz J."/>
            <person name="Martinez M."/>
            <person name="Larimer F."/>
            <person name="Land M."/>
            <person name="Kyrpides N."/>
            <person name="Ivanova N."/>
            <person name="Richardson P."/>
        </authorList>
    </citation>
    <scope>NUCLEOTIDE SEQUENCE [LARGE SCALE GENOMIC DNA]</scope>
    <source>
        <strain>CC9605</strain>
    </source>
</reference>
<evidence type="ECO:0000255" key="1">
    <source>
        <dbReference type="HAMAP-Rule" id="MF_00633"/>
    </source>
</evidence>
<protein>
    <recommendedName>
        <fullName evidence="1">Cytochrome b6</fullName>
    </recommendedName>
</protein>
<comment type="function">
    <text evidence="1">Component of the cytochrome b6-f complex, which mediates electron transfer between photosystem II (PSII) and photosystem I (PSI), cyclic electron flow around PSI, and state transitions.</text>
</comment>
<comment type="cofactor">
    <cofactor evidence="1">
        <name>heme b</name>
        <dbReference type="ChEBI" id="CHEBI:60344"/>
    </cofactor>
    <text evidence="1">Binds 2 heme b groups non-covalently with two histidine residues as axial ligands.</text>
</comment>
<comment type="cofactor">
    <cofactor evidence="1">
        <name>heme c</name>
        <dbReference type="ChEBI" id="CHEBI:61717"/>
    </cofactor>
    <text evidence="1">Binds one heme group covalently by a single cysteine link with no axial amino acid ligand. This heme was named heme ci.</text>
</comment>
<comment type="subunit">
    <text evidence="1">The 4 large subunits of the cytochrome b6-f complex are cytochrome b6, subunit IV (17 kDa polypeptide, PetD), cytochrome f and the Rieske protein, while the 4 small subunits are PetG, PetL, PetM and PetN. The complex functions as a dimer.</text>
</comment>
<comment type="subcellular location">
    <subcellularLocation>
        <location evidence="1">Cellular thylakoid membrane</location>
        <topology evidence="1">Multi-pass membrane protein</topology>
    </subcellularLocation>
</comment>
<comment type="miscellaneous">
    <text evidence="1">Heme 1 (or BH or b566) is high-potential and absorbs at about 566 nm, and heme 2 (or BL or b562) is low-potential and absorbs at about 562 nm.</text>
</comment>
<comment type="similarity">
    <text evidence="1">Belongs to the cytochrome b family. PetB subfamily.</text>
</comment>
<gene>
    <name evidence="1" type="primary">petB</name>
    <name type="ordered locus">Syncc9605_0485</name>
</gene>
<feature type="chain" id="PRO_1000061420" description="Cytochrome b6">
    <location>
        <begin position="1"/>
        <end position="218"/>
    </location>
</feature>
<feature type="transmembrane region" description="Helical" evidence="1">
    <location>
        <begin position="35"/>
        <end position="55"/>
    </location>
</feature>
<feature type="transmembrane region" description="Helical" evidence="1">
    <location>
        <begin position="93"/>
        <end position="113"/>
    </location>
</feature>
<feature type="transmembrane region" description="Helical" evidence="1">
    <location>
        <begin position="119"/>
        <end position="139"/>
    </location>
</feature>
<feature type="transmembrane region" description="Helical" evidence="1">
    <location>
        <begin position="189"/>
        <end position="209"/>
    </location>
</feature>
<feature type="binding site" description="covalent" evidence="1">
    <location>
        <position position="38"/>
    </location>
    <ligand>
        <name>heme c</name>
        <dbReference type="ChEBI" id="CHEBI:61717"/>
    </ligand>
</feature>
<feature type="binding site" description="axial binding residue" evidence="1">
    <location>
        <position position="89"/>
    </location>
    <ligand>
        <name>heme b</name>
        <dbReference type="ChEBI" id="CHEBI:60344"/>
        <label>2</label>
    </ligand>
    <ligandPart>
        <name>Fe</name>
        <dbReference type="ChEBI" id="CHEBI:18248"/>
    </ligandPart>
</feature>
<feature type="binding site" description="axial binding residue" evidence="1">
    <location>
        <position position="103"/>
    </location>
    <ligand>
        <name>heme b</name>
        <dbReference type="ChEBI" id="CHEBI:60344"/>
        <label>1</label>
    </ligand>
    <ligandPart>
        <name>Fe</name>
        <dbReference type="ChEBI" id="CHEBI:18248"/>
    </ligandPart>
</feature>
<feature type="binding site" description="axial binding residue" evidence="1">
    <location>
        <position position="190"/>
    </location>
    <ligand>
        <name>heme b</name>
        <dbReference type="ChEBI" id="CHEBI:60344"/>
        <label>2</label>
    </ligand>
    <ligandPart>
        <name>Fe</name>
        <dbReference type="ChEBI" id="CHEBI:18248"/>
    </ligandPart>
</feature>
<feature type="binding site" description="axial binding residue" evidence="1">
    <location>
        <position position="205"/>
    </location>
    <ligand>
        <name>heme b</name>
        <dbReference type="ChEBI" id="CHEBI:60344"/>
        <label>1</label>
    </ligand>
    <ligandPart>
        <name>Fe</name>
        <dbReference type="ChEBI" id="CHEBI:18248"/>
    </ligandPart>
</feature>
<dbReference type="EMBL" id="CP000110">
    <property type="protein sequence ID" value="ABB34259.1"/>
    <property type="molecule type" value="Genomic_DNA"/>
</dbReference>
<dbReference type="RefSeq" id="WP_011363493.1">
    <property type="nucleotide sequence ID" value="NC_007516.1"/>
</dbReference>
<dbReference type="SMR" id="Q3AMC3"/>
<dbReference type="STRING" id="110662.Syncc9605_0485"/>
<dbReference type="KEGG" id="syd:Syncc9605_0485"/>
<dbReference type="eggNOG" id="COG1290">
    <property type="taxonomic scope" value="Bacteria"/>
</dbReference>
<dbReference type="HOGENOM" id="CLU_031114_0_2_3"/>
<dbReference type="OrthoDB" id="9804503at2"/>
<dbReference type="GO" id="GO:0031676">
    <property type="term" value="C:plasma membrane-derived thylakoid membrane"/>
    <property type="evidence" value="ECO:0007669"/>
    <property type="project" value="UniProtKB-SubCell"/>
</dbReference>
<dbReference type="GO" id="GO:0045158">
    <property type="term" value="F:electron transporter, transferring electrons within cytochrome b6/f complex of photosystem II activity"/>
    <property type="evidence" value="ECO:0007669"/>
    <property type="project" value="UniProtKB-UniRule"/>
</dbReference>
<dbReference type="GO" id="GO:0046872">
    <property type="term" value="F:metal ion binding"/>
    <property type="evidence" value="ECO:0007669"/>
    <property type="project" value="UniProtKB-KW"/>
</dbReference>
<dbReference type="GO" id="GO:0016491">
    <property type="term" value="F:oxidoreductase activity"/>
    <property type="evidence" value="ECO:0007669"/>
    <property type="project" value="InterPro"/>
</dbReference>
<dbReference type="GO" id="GO:0015979">
    <property type="term" value="P:photosynthesis"/>
    <property type="evidence" value="ECO:0007669"/>
    <property type="project" value="UniProtKB-UniRule"/>
</dbReference>
<dbReference type="GO" id="GO:0022904">
    <property type="term" value="P:respiratory electron transport chain"/>
    <property type="evidence" value="ECO:0007669"/>
    <property type="project" value="InterPro"/>
</dbReference>
<dbReference type="CDD" id="cd00284">
    <property type="entry name" value="Cytochrome_b_N"/>
    <property type="match status" value="1"/>
</dbReference>
<dbReference type="FunFam" id="1.20.810.10:FF:000001">
    <property type="entry name" value="Cytochrome b6"/>
    <property type="match status" value="1"/>
</dbReference>
<dbReference type="Gene3D" id="1.20.810.10">
    <property type="entry name" value="Cytochrome Bc1 Complex, Chain C"/>
    <property type="match status" value="1"/>
</dbReference>
<dbReference type="HAMAP" id="MF_00633">
    <property type="entry name" value="Cytb6_f_cytb6"/>
    <property type="match status" value="1"/>
</dbReference>
<dbReference type="InterPro" id="IPR005797">
    <property type="entry name" value="Cyt_b/b6_N"/>
</dbReference>
<dbReference type="InterPro" id="IPR023530">
    <property type="entry name" value="Cyt_B6_PetB"/>
</dbReference>
<dbReference type="InterPro" id="IPR027387">
    <property type="entry name" value="Cytb/b6-like_sf"/>
</dbReference>
<dbReference type="InterPro" id="IPR048259">
    <property type="entry name" value="Cytochrome_b_N_euk/bac"/>
</dbReference>
<dbReference type="InterPro" id="IPR016174">
    <property type="entry name" value="Di-haem_cyt_TM"/>
</dbReference>
<dbReference type="NCBIfam" id="NF002990">
    <property type="entry name" value="PRK03735.1"/>
    <property type="match status" value="1"/>
</dbReference>
<dbReference type="PANTHER" id="PTHR19271">
    <property type="entry name" value="CYTOCHROME B"/>
    <property type="match status" value="1"/>
</dbReference>
<dbReference type="PANTHER" id="PTHR19271:SF16">
    <property type="entry name" value="CYTOCHROME B"/>
    <property type="match status" value="1"/>
</dbReference>
<dbReference type="Pfam" id="PF00033">
    <property type="entry name" value="Cytochrome_B"/>
    <property type="match status" value="1"/>
</dbReference>
<dbReference type="PIRSF" id="PIRSF000032">
    <property type="entry name" value="Cytochrome_b6"/>
    <property type="match status" value="1"/>
</dbReference>
<dbReference type="SUPFAM" id="SSF81342">
    <property type="entry name" value="Transmembrane di-heme cytochromes"/>
    <property type="match status" value="1"/>
</dbReference>
<dbReference type="PROSITE" id="PS51002">
    <property type="entry name" value="CYTB_NTER"/>
    <property type="match status" value="1"/>
</dbReference>
<keyword id="KW-0249">Electron transport</keyword>
<keyword id="KW-0349">Heme</keyword>
<keyword id="KW-0408">Iron</keyword>
<keyword id="KW-0472">Membrane</keyword>
<keyword id="KW-0479">Metal-binding</keyword>
<keyword id="KW-0602">Photosynthesis</keyword>
<keyword id="KW-0793">Thylakoid</keyword>
<keyword id="KW-0812">Transmembrane</keyword>
<keyword id="KW-1133">Transmembrane helix</keyword>
<keyword id="KW-0813">Transport</keyword>
<sequence length="218" mass="24653">MANSSPVYDWFQERLEIQDIADDIGSKYVPPHVNIFYCLGGITLVCFLIQFATGFAMTFYYKPTVAEAYKSVEYLMTDVSFGWLIRSVHRWSASMMVLMLILHVFRVYLTGGFKRPRELTWVTGVTMAVITVSFGVTGYSLPWDQVGYWAVKIVSGVPAAIPVVGDFMVELLRGGESVGQATLTRFYSLHTFVMPWLLAVFMLMHFLMIRKQGISGPL</sequence>
<organism>
    <name type="scientific">Synechococcus sp. (strain CC9605)</name>
    <dbReference type="NCBI Taxonomy" id="110662"/>
    <lineage>
        <taxon>Bacteria</taxon>
        <taxon>Bacillati</taxon>
        <taxon>Cyanobacteriota</taxon>
        <taxon>Cyanophyceae</taxon>
        <taxon>Synechococcales</taxon>
        <taxon>Synechococcaceae</taxon>
        <taxon>Synechococcus</taxon>
    </lineage>
</organism>
<proteinExistence type="inferred from homology"/>
<accession>Q3AMC3</accession>